<organism>
    <name type="scientific">Sus scrofa</name>
    <name type="common">Pig</name>
    <dbReference type="NCBI Taxonomy" id="9823"/>
    <lineage>
        <taxon>Eukaryota</taxon>
        <taxon>Metazoa</taxon>
        <taxon>Chordata</taxon>
        <taxon>Craniata</taxon>
        <taxon>Vertebrata</taxon>
        <taxon>Euteleostomi</taxon>
        <taxon>Mammalia</taxon>
        <taxon>Eutheria</taxon>
        <taxon>Laurasiatheria</taxon>
        <taxon>Artiodactyla</taxon>
        <taxon>Suina</taxon>
        <taxon>Suidae</taxon>
        <taxon>Sus</taxon>
    </lineage>
</organism>
<feature type="initiator methionine" description="Removed" evidence="1">
    <location>
        <position position="1"/>
    </location>
</feature>
<feature type="chain" id="PRO_0000318076" description="Sideroflexin-1">
    <location>
        <begin position="2"/>
        <end position="322"/>
    </location>
</feature>
<feature type="topological domain" description="Mitochondrial matrix" evidence="1">
    <location>
        <begin position="2"/>
        <end position="102"/>
    </location>
</feature>
<feature type="transmembrane region" description="Helical" evidence="2">
    <location>
        <begin position="103"/>
        <end position="120"/>
    </location>
</feature>
<feature type="topological domain" description="Mitochondrial intermembrane" evidence="3">
    <location>
        <begin position="121"/>
        <end position="146"/>
    </location>
</feature>
<feature type="transmembrane region" description="Helical" evidence="2">
    <location>
        <begin position="147"/>
        <end position="167"/>
    </location>
</feature>
<feature type="topological domain" description="Mitochondrial matrix" evidence="3">
    <location>
        <begin position="168"/>
        <end position="174"/>
    </location>
</feature>
<feature type="transmembrane region" description="Helical" evidence="2">
    <location>
        <begin position="175"/>
        <end position="195"/>
    </location>
</feature>
<feature type="topological domain" description="Mitochondrial intermembrane" evidence="3">
    <location>
        <begin position="196"/>
        <end position="228"/>
    </location>
</feature>
<feature type="transmembrane region" description="Helical" evidence="2">
    <location>
        <begin position="229"/>
        <end position="249"/>
    </location>
</feature>
<feature type="topological domain" description="Mitochondrial matrix" evidence="3">
    <location>
        <begin position="250"/>
        <end position="266"/>
    </location>
</feature>
<feature type="transmembrane region" description="Helical" evidence="2">
    <location>
        <begin position="267"/>
        <end position="287"/>
    </location>
</feature>
<feature type="topological domain" description="Mitochondrial intermembrane" evidence="1">
    <location>
        <begin position="288"/>
        <end position="322"/>
    </location>
</feature>
<feature type="modified residue" description="N-acetylserine" evidence="1">
    <location>
        <position position="2"/>
    </location>
</feature>
<comment type="function">
    <text evidence="1">Amino acid transporter importing serine, an essential substrate of the mitochondrial branch of the one-carbon pathway, into mitochondria. Mitochondrial serine is then converted to glycine and formate, which exits to the cytosol where it is used to generate the charged folates that serve as one-carbon donors. May also transport other amino acids including alanine and cysteine.</text>
</comment>
<comment type="catalytic activity">
    <reaction evidence="1">
        <text>L-serine(in) = L-serine(out)</text>
        <dbReference type="Rhea" id="RHEA:35031"/>
        <dbReference type="ChEBI" id="CHEBI:33384"/>
    </reaction>
</comment>
<comment type="catalytic activity">
    <reaction evidence="1">
        <text>L-alanine(in) = L-alanine(out)</text>
        <dbReference type="Rhea" id="RHEA:70719"/>
        <dbReference type="ChEBI" id="CHEBI:57972"/>
    </reaction>
</comment>
<comment type="catalytic activity">
    <reaction evidence="1">
        <text>L-cysteine(in) = L-cysteine(out)</text>
        <dbReference type="Rhea" id="RHEA:29655"/>
        <dbReference type="ChEBI" id="CHEBI:35235"/>
    </reaction>
</comment>
<comment type="subcellular location">
    <subcellularLocation>
        <location evidence="1">Mitochondrion inner membrane</location>
        <topology evidence="2">Multi-pass membrane protein</topology>
    </subcellularLocation>
</comment>
<comment type="similarity">
    <text evidence="3">Belongs to the sideroflexin family.</text>
</comment>
<keyword id="KW-0007">Acetylation</keyword>
<keyword id="KW-0029">Amino-acid transport</keyword>
<keyword id="KW-0472">Membrane</keyword>
<keyword id="KW-0496">Mitochondrion</keyword>
<keyword id="KW-0999">Mitochondrion inner membrane</keyword>
<keyword id="KW-0554">One-carbon metabolism</keyword>
<keyword id="KW-1185">Reference proteome</keyword>
<keyword id="KW-0812">Transmembrane</keyword>
<keyword id="KW-1133">Transmembrane helix</keyword>
<keyword id="KW-0813">Transport</keyword>
<evidence type="ECO:0000250" key="1">
    <source>
        <dbReference type="UniProtKB" id="Q9H9B4"/>
    </source>
</evidence>
<evidence type="ECO:0000255" key="2"/>
<evidence type="ECO:0000305" key="3"/>
<reference key="1">
    <citation type="submission" date="2006-09" db="EMBL/GenBank/DDBJ databases">
        <title>Sequences and genetic variations of fourty-four porcine coat color related genes.</title>
        <authorList>
            <person name="Okumura N."/>
            <person name="Matsumoto T."/>
            <person name="Hamasima N."/>
            <person name="Uenishi H."/>
            <person name="Ogawa T."/>
            <person name="Komatsuda A."/>
            <person name="Fukudome N."/>
            <person name="Ide H."/>
            <person name="Suzuki A."/>
            <person name="Kojima C."/>
            <person name="Awata T."/>
        </authorList>
    </citation>
    <scope>NUCLEOTIDE SEQUENCE [MRNA]</scope>
</reference>
<name>SFXN1_PIG</name>
<gene>
    <name type="primary">SFXN1</name>
</gene>
<sequence>MSGELPPNINIKEPRWDQSTFVGRANHFFTVTDPRNILLTNEQLENARKVVHDYRQGIVPPGLTENELWRAKYIYDSAFHPDTGEKMILIGRMSAQVPMNMTITGCMMTFYRTTPAVLFWQWINQSFNAVVNYTNRSGDAPLTVNELGTAYVSATTGAVATALGLNALTKHVSPLIGRFVPFAAVAAANCINIPLMRQRELRAGIPVTDENGNRLGESANAAKQAITQVVISRILMAAPGMAIPPFIMNTLEKKAFLKRFPWMSAPIQVGLVGFCLVFATPLCCALFPQKSSMSVTSLEAELQAKIRETSPELRRVYFNKGL</sequence>
<accession>A5A761</accession>
<proteinExistence type="evidence at transcript level"/>
<dbReference type="EMBL" id="AB271931">
    <property type="protein sequence ID" value="BAF62306.1"/>
    <property type="molecule type" value="mRNA"/>
</dbReference>
<dbReference type="RefSeq" id="NP_001092072.1">
    <property type="nucleotide sequence ID" value="NM_001098602.2"/>
</dbReference>
<dbReference type="RefSeq" id="XP_005655032.1">
    <property type="nucleotide sequence ID" value="XM_005654975.3"/>
</dbReference>
<dbReference type="RefSeq" id="XP_005655033.1">
    <property type="nucleotide sequence ID" value="XM_005654976.3"/>
</dbReference>
<dbReference type="RefSeq" id="XP_005655035.1">
    <property type="nucleotide sequence ID" value="XM_005654978.3"/>
</dbReference>
<dbReference type="RefSeq" id="XP_020932161.1">
    <property type="nucleotide sequence ID" value="XM_021076502.1"/>
</dbReference>
<dbReference type="RefSeq" id="XP_020932170.1">
    <property type="nucleotide sequence ID" value="XM_021076511.1"/>
</dbReference>
<dbReference type="FunCoup" id="A5A761">
    <property type="interactions" value="558"/>
</dbReference>
<dbReference type="STRING" id="9823.ENSSSCP00000014954"/>
<dbReference type="PaxDb" id="9823-ENSSSCP00000014954"/>
<dbReference type="PeptideAtlas" id="A5A761"/>
<dbReference type="Ensembl" id="ENSSSCT00000015362.5">
    <property type="protein sequence ID" value="ENSSSCP00000014954.2"/>
    <property type="gene ID" value="ENSSSCG00000014063.5"/>
</dbReference>
<dbReference type="Ensembl" id="ENSSSCT00015021483.1">
    <property type="protein sequence ID" value="ENSSSCP00015008447.1"/>
    <property type="gene ID" value="ENSSSCG00015016138.1"/>
</dbReference>
<dbReference type="Ensembl" id="ENSSSCT00025096112.1">
    <property type="protein sequence ID" value="ENSSSCP00025042203.1"/>
    <property type="gene ID" value="ENSSSCG00025069939.1"/>
</dbReference>
<dbReference type="Ensembl" id="ENSSSCT00030050889.1">
    <property type="protein sequence ID" value="ENSSSCP00030023143.1"/>
    <property type="gene ID" value="ENSSSCG00030036591.1"/>
</dbReference>
<dbReference type="Ensembl" id="ENSSSCT00040099930.1">
    <property type="protein sequence ID" value="ENSSSCP00040044861.1"/>
    <property type="gene ID" value="ENSSSCG00040072474.1"/>
</dbReference>
<dbReference type="Ensembl" id="ENSSSCT00045005202.1">
    <property type="protein sequence ID" value="ENSSSCP00045003445.1"/>
    <property type="gene ID" value="ENSSSCG00045003198.1"/>
</dbReference>
<dbReference type="Ensembl" id="ENSSSCT00050026751.1">
    <property type="protein sequence ID" value="ENSSSCP00050011070.1"/>
    <property type="gene ID" value="ENSSSCG00050019804.1"/>
</dbReference>
<dbReference type="Ensembl" id="ENSSSCT00055003418.1">
    <property type="protein sequence ID" value="ENSSSCP00055002577.1"/>
    <property type="gene ID" value="ENSSSCG00055001836.1"/>
</dbReference>
<dbReference type="Ensembl" id="ENSSSCT00060017605.1">
    <property type="protein sequence ID" value="ENSSSCP00060007021.1"/>
    <property type="gene ID" value="ENSSSCG00060013360.1"/>
</dbReference>
<dbReference type="Ensembl" id="ENSSSCT00065023903.1">
    <property type="protein sequence ID" value="ENSSSCP00065009735.1"/>
    <property type="gene ID" value="ENSSSCG00065017983.1"/>
</dbReference>
<dbReference type="Ensembl" id="ENSSSCT00070003874.1">
    <property type="protein sequence ID" value="ENSSSCP00070003207.1"/>
    <property type="gene ID" value="ENSSSCG00070002048.1"/>
</dbReference>
<dbReference type="Ensembl" id="ENSSSCT00070003879.1">
    <property type="protein sequence ID" value="ENSSSCP00070003213.1"/>
    <property type="gene ID" value="ENSSSCG00070002048.1"/>
</dbReference>
<dbReference type="Ensembl" id="ENSSSCT00085030100">
    <property type="protein sequence ID" value="ENSSSCP00085020805"/>
    <property type="gene ID" value="ENSSSCG00085015819"/>
</dbReference>
<dbReference type="Ensembl" id="ENSSSCT00105076360">
    <property type="protein sequence ID" value="ENSSSCP00105054076"/>
    <property type="gene ID" value="ENSSSCG00105040033"/>
</dbReference>
<dbReference type="Ensembl" id="ENSSSCT00110030263">
    <property type="protein sequence ID" value="ENSSSCP00110020513"/>
    <property type="gene ID" value="ENSSSCG00110015856"/>
</dbReference>
<dbReference type="Ensembl" id="ENSSSCT00115029792">
    <property type="protein sequence ID" value="ENSSSCP00115028295"/>
    <property type="gene ID" value="ENSSSCG00115016961"/>
</dbReference>
<dbReference type="Ensembl" id="ENSSSCT00130067603">
    <property type="protein sequence ID" value="ENSSSCP00130048515"/>
    <property type="gene ID" value="ENSSSCG00130034574"/>
</dbReference>
<dbReference type="GeneID" id="100049699"/>
<dbReference type="KEGG" id="ssc:100049699"/>
<dbReference type="CTD" id="94081"/>
<dbReference type="VGNC" id="VGNC:92783">
    <property type="gene designation" value="SFXN1"/>
</dbReference>
<dbReference type="eggNOG" id="KOG3767">
    <property type="taxonomic scope" value="Eukaryota"/>
</dbReference>
<dbReference type="GeneTree" id="ENSGT01030000234641"/>
<dbReference type="HOGENOM" id="CLU_039425_1_0_1"/>
<dbReference type="InParanoid" id="A5A761"/>
<dbReference type="OMA" id="GRVRHCA"/>
<dbReference type="OrthoDB" id="6608471at2759"/>
<dbReference type="TreeFam" id="TF313205"/>
<dbReference type="Proteomes" id="UP000008227">
    <property type="component" value="Chromosome 2"/>
</dbReference>
<dbReference type="Proteomes" id="UP000314985">
    <property type="component" value="Chromosome 2"/>
</dbReference>
<dbReference type="Proteomes" id="UP000694570">
    <property type="component" value="Unplaced"/>
</dbReference>
<dbReference type="Proteomes" id="UP000694571">
    <property type="component" value="Unplaced"/>
</dbReference>
<dbReference type="Proteomes" id="UP000694720">
    <property type="component" value="Unplaced"/>
</dbReference>
<dbReference type="Proteomes" id="UP000694722">
    <property type="component" value="Unplaced"/>
</dbReference>
<dbReference type="Proteomes" id="UP000694723">
    <property type="component" value="Unplaced"/>
</dbReference>
<dbReference type="Proteomes" id="UP000694724">
    <property type="component" value="Unplaced"/>
</dbReference>
<dbReference type="Proteomes" id="UP000694725">
    <property type="component" value="Unplaced"/>
</dbReference>
<dbReference type="Proteomes" id="UP000694726">
    <property type="component" value="Unplaced"/>
</dbReference>
<dbReference type="Proteomes" id="UP000694727">
    <property type="component" value="Unplaced"/>
</dbReference>
<dbReference type="Proteomes" id="UP000694728">
    <property type="component" value="Unplaced"/>
</dbReference>
<dbReference type="Bgee" id="ENSSSCG00000014063">
    <property type="expression patterns" value="Expressed in metanephros cortex and 42 other cell types or tissues"/>
</dbReference>
<dbReference type="ExpressionAtlas" id="A5A761">
    <property type="expression patterns" value="baseline and differential"/>
</dbReference>
<dbReference type="GO" id="GO:0005743">
    <property type="term" value="C:mitochondrial inner membrane"/>
    <property type="evidence" value="ECO:0000250"/>
    <property type="project" value="UniProtKB"/>
</dbReference>
<dbReference type="GO" id="GO:0015180">
    <property type="term" value="F:L-alanine transmembrane transporter activity"/>
    <property type="evidence" value="ECO:0000250"/>
    <property type="project" value="UniProtKB"/>
</dbReference>
<dbReference type="GO" id="GO:0015194">
    <property type="term" value="F:L-serine transmembrane transporter activity"/>
    <property type="evidence" value="ECO:0000250"/>
    <property type="project" value="UniProtKB"/>
</dbReference>
<dbReference type="GO" id="GO:0015075">
    <property type="term" value="F:monoatomic ion transmembrane transporter activity"/>
    <property type="evidence" value="ECO:0007669"/>
    <property type="project" value="InterPro"/>
</dbReference>
<dbReference type="GO" id="GO:0022857">
    <property type="term" value="F:transmembrane transporter activity"/>
    <property type="evidence" value="ECO:0000318"/>
    <property type="project" value="GO_Central"/>
</dbReference>
<dbReference type="GO" id="GO:0015808">
    <property type="term" value="P:L-alanine transport"/>
    <property type="evidence" value="ECO:0000250"/>
    <property type="project" value="UniProtKB"/>
</dbReference>
<dbReference type="GO" id="GO:0015825">
    <property type="term" value="P:L-serine transport"/>
    <property type="evidence" value="ECO:0000250"/>
    <property type="project" value="UniProtKB"/>
</dbReference>
<dbReference type="GO" id="GO:0006730">
    <property type="term" value="P:one-carbon metabolic process"/>
    <property type="evidence" value="ECO:0000250"/>
    <property type="project" value="UniProtKB"/>
</dbReference>
<dbReference type="GO" id="GO:0140300">
    <property type="term" value="P:serine import into mitochondrion"/>
    <property type="evidence" value="ECO:0000250"/>
    <property type="project" value="UniProtKB"/>
</dbReference>
<dbReference type="InterPro" id="IPR004686">
    <property type="entry name" value="Mtc"/>
</dbReference>
<dbReference type="NCBIfam" id="TIGR00798">
    <property type="entry name" value="mtc"/>
    <property type="match status" value="1"/>
</dbReference>
<dbReference type="PANTHER" id="PTHR11153">
    <property type="entry name" value="SIDEROFLEXIN"/>
    <property type="match status" value="1"/>
</dbReference>
<dbReference type="PANTHER" id="PTHR11153:SF8">
    <property type="entry name" value="SIDEROFLEXIN-1"/>
    <property type="match status" value="1"/>
</dbReference>
<dbReference type="Pfam" id="PF03820">
    <property type="entry name" value="SFXNs"/>
    <property type="match status" value="1"/>
</dbReference>
<protein>
    <recommendedName>
        <fullName>Sideroflexin-1</fullName>
    </recommendedName>
</protein>